<dbReference type="EC" id="2.3.1.20"/>
<dbReference type="EMBL" id="AF391089">
    <property type="protein sequence ID" value="AAK84179.1"/>
    <property type="molecule type" value="mRNA"/>
</dbReference>
<dbReference type="GlyCosmos" id="Q96UY2">
    <property type="glycosylation" value="1 site, No reported glycans"/>
</dbReference>
<dbReference type="BRENDA" id="2.3.1.20">
    <property type="organism ID" value="3434"/>
</dbReference>
<dbReference type="UniPathway" id="UPA00282"/>
<dbReference type="GO" id="GO:0005789">
    <property type="term" value="C:endoplasmic reticulum membrane"/>
    <property type="evidence" value="ECO:0007669"/>
    <property type="project" value="UniProtKB-SubCell"/>
</dbReference>
<dbReference type="GO" id="GO:0004144">
    <property type="term" value="F:diacylglycerol O-acyltransferase activity"/>
    <property type="evidence" value="ECO:0007669"/>
    <property type="project" value="UniProtKB-EC"/>
</dbReference>
<dbReference type="GO" id="GO:0006071">
    <property type="term" value="P:glycerol metabolic process"/>
    <property type="evidence" value="ECO:0007669"/>
    <property type="project" value="UniProtKB-KW"/>
</dbReference>
<dbReference type="GO" id="GO:0019432">
    <property type="term" value="P:triglyceride biosynthetic process"/>
    <property type="evidence" value="ECO:0007669"/>
    <property type="project" value="UniProtKB-UniPathway"/>
</dbReference>
<dbReference type="CDD" id="cd07987">
    <property type="entry name" value="LPLAT_MGAT-like"/>
    <property type="match status" value="1"/>
</dbReference>
<dbReference type="InterPro" id="IPR007130">
    <property type="entry name" value="DAGAT"/>
</dbReference>
<dbReference type="PANTHER" id="PTHR12317:SF0">
    <property type="entry name" value="ACYLTRANSFERASE"/>
    <property type="match status" value="1"/>
</dbReference>
<dbReference type="PANTHER" id="PTHR12317">
    <property type="entry name" value="DIACYLGLYCEROL O-ACYLTRANSFERASE"/>
    <property type="match status" value="1"/>
</dbReference>
<dbReference type="Pfam" id="PF03982">
    <property type="entry name" value="DAGAT"/>
    <property type="match status" value="1"/>
</dbReference>
<keyword id="KW-0012">Acyltransferase</keyword>
<keyword id="KW-0903">Direct protein sequencing</keyword>
<keyword id="KW-0256">Endoplasmic reticulum</keyword>
<keyword id="KW-0319">Glycerol metabolism</keyword>
<keyword id="KW-0325">Glycoprotein</keyword>
<keyword id="KW-0444">Lipid biosynthesis</keyword>
<keyword id="KW-0443">Lipid metabolism</keyword>
<keyword id="KW-0472">Membrane</keyword>
<keyword id="KW-0808">Transferase</keyword>
<keyword id="KW-0812">Transmembrane</keyword>
<keyword id="KW-1133">Transmembrane helix</keyword>
<sequence length="355" mass="40603">MASKDQHLQQKVKHTLEAIPSPRYAPLRVPLRRRLQTLAVLLWCSMMSICMFIFFFLCSIPVLLWFPIILYLTWILVWDKAPENGGRPIRWLRNAAWWKLFAGYFPAHVIKEADLDPSKNYIFGYHPHGIISMGSFCTFSTNATGFDDLFPGIRPSLLTLTSNFNIPLYRDYLMACGLCSVSKTSCQNILTKGGPGRSIAIVVGGASESLNARPGVMDLVLKRRFGFIKIAVQTGASLVPTISFGENELYEQIESNENSKLHRWQKKIQHALGFTMPLFHGRGVFNYDFGLLPHRHPIYTIVGKPIPVPSIKYGQTKDEIIRELHDSYMHAVQDLYDRYKDIYAKDRVKELEFVE</sequence>
<gene>
    <name type="primary">DGAT2A</name>
</gene>
<organism>
    <name type="scientific">Umbelopsis ramanniana</name>
    <name type="common">Oleaginous fungus</name>
    <name type="synonym">Mortierella ramanniana</name>
    <dbReference type="NCBI Taxonomy" id="41833"/>
    <lineage>
        <taxon>Eukaryota</taxon>
        <taxon>Fungi</taxon>
        <taxon>Fungi incertae sedis</taxon>
        <taxon>Mucoromycota</taxon>
        <taxon>Mucoromycotina</taxon>
        <taxon>Umbelopsidomycetes</taxon>
        <taxon>Umbelopsidales</taxon>
        <taxon>Umbelopsidaceae</taxon>
        <taxon>Umbelopsis</taxon>
    </lineage>
</organism>
<proteinExistence type="evidence at protein level"/>
<name>DGT2A_UMBRA</name>
<comment type="function">
    <text>Catalyzes the terminal and only committed step in triacylglycerol synthesis by using diacylglycerol and fatty acyl CoA as substrates. Required for storage lipid synthesis.</text>
</comment>
<comment type="catalytic activity">
    <reaction evidence="3">
        <text>an acyl-CoA + a 1,2-diacyl-sn-glycerol = a triacyl-sn-glycerol + CoA</text>
        <dbReference type="Rhea" id="RHEA:10868"/>
        <dbReference type="ChEBI" id="CHEBI:17815"/>
        <dbReference type="ChEBI" id="CHEBI:57287"/>
        <dbReference type="ChEBI" id="CHEBI:58342"/>
        <dbReference type="ChEBI" id="CHEBI:64615"/>
        <dbReference type="EC" id="2.3.1.20"/>
    </reaction>
</comment>
<comment type="biophysicochemical properties">
    <phDependence>
        <text evidence="3">Optimum pH is 6.0-8.0.</text>
    </phDependence>
</comment>
<comment type="pathway">
    <text>Glycerolipid metabolism; triacylglycerol biosynthesis.</text>
</comment>
<comment type="subcellular location">
    <subcellularLocation>
        <location evidence="1">Endoplasmic reticulum membrane</location>
        <topology evidence="1">Multi-pass membrane protein</topology>
    </subcellularLocation>
</comment>
<comment type="similarity">
    <text evidence="4">Belongs to the diacylglycerol acyltransferase family.</text>
</comment>
<reference key="1">
    <citation type="journal article" date="2001" name="J. Biol. Chem.">
        <title>DGAT2 is a new diacylglycerol acyltransferase gene family. purification, cloning, and expression in insect cells of two polypeptides from Mortierella ramanniana with diacylglycerol acyltransferase activity.</title>
        <authorList>
            <person name="Lardizabal K.D."/>
            <person name="Mai J.T."/>
            <person name="Wagner N.W."/>
            <person name="Wyrick A."/>
            <person name="Voelker T."/>
            <person name="Hawkins D.J."/>
        </authorList>
    </citation>
    <scope>NUCLEOTIDE SEQUENCE [MRNA]</scope>
    <scope>PARTIAL PROTEIN SEQUENCE</scope>
    <scope>BIOPHYSICOCHEMICAL PROPERTIES</scope>
    <scope>ENZYME ACTIVITY</scope>
</reference>
<accession>Q96UY2</accession>
<feature type="chain" id="PRO_0000249055" description="Diacylglycerol O-acyltransferase 2A">
    <location>
        <begin position="1"/>
        <end position="355"/>
    </location>
</feature>
<feature type="transmembrane region" description="Helical" evidence="2">
    <location>
        <begin position="41"/>
        <end position="61"/>
    </location>
</feature>
<feature type="transmembrane region" description="Helical" evidence="2">
    <location>
        <begin position="62"/>
        <end position="78"/>
    </location>
</feature>
<feature type="glycosylation site" description="N-linked (GlcNAc...) asparagine" evidence="2">
    <location>
        <position position="142"/>
    </location>
</feature>
<evidence type="ECO:0000250" key="1"/>
<evidence type="ECO:0000255" key="2"/>
<evidence type="ECO:0000269" key="3">
    <source>
    </source>
</evidence>
<evidence type="ECO:0000305" key="4"/>
<protein>
    <recommendedName>
        <fullName>Diacylglycerol O-acyltransferase 2A</fullName>
        <ecNumber>2.3.1.20</ecNumber>
    </recommendedName>
    <alternativeName>
        <fullName>Diglyceride acyltransferase 2A</fullName>
    </alternativeName>
    <alternativeName>
        <fullName>MrDGAT2A</fullName>
    </alternativeName>
</protein>